<accession>Q928A5</accession>
<name>UVRA_LISIN</name>
<comment type="function">
    <text evidence="1">The UvrABC repair system catalyzes the recognition and processing of DNA lesions. UvrA is an ATPase and a DNA-binding protein. A damage recognition complex composed of 2 UvrA and 2 UvrB subunits scans DNA for abnormalities. When the presence of a lesion has been verified by UvrB, the UvrA molecules dissociate.</text>
</comment>
<comment type="subunit">
    <text evidence="1">Forms a heterotetramer with UvrB during the search for lesions.</text>
</comment>
<comment type="subcellular location">
    <subcellularLocation>
        <location evidence="1">Cytoplasm</location>
    </subcellularLocation>
</comment>
<comment type="similarity">
    <text evidence="1">Belongs to the ABC transporter superfamily. UvrA family.</text>
</comment>
<sequence>MDKEKIVIQGARAHNLKNIDVEIPRDKLVVMTGLSGSGKSSLAFDTIYAEGQRRYVESLSAYARQFLGQMDKPDVDLIEGLSPAISIDQKTTSRNPRSTVGTVTEIHDYLRLLYARVGHPVCPNHGIEITSQTIEQMVDRVLEYPEKTRIQIMAPIVSGKKGTHKKTIEEIKKEGYVRIRVDGEIYDINDEIEIEKNKKHSIEIIIDRIVIKEGINTRLYDSIEAALRLADGYAVVEIMGDKELLFSEHYACPYCGFSVGELEPRMFSFNSPFGACPTCDGLGTKLEVDVDTVIPDRSLTLNEGAIVPWRPISSQYYPQMLASACKEFGIDMDTPIEELSKEALDIVLNGSKDKEFYFEYKNDFGMTRETWIPFEGILPNIERRYRETNSDFTRDQMAQYMTDLPCPSCKGYRLKEETLSVKVNNHHIGQISEFSINEALDFFDSLELSEKETQIAAPIFKEVRARLGFLKNVGLDYLTMSRAAGTLSGGEAQRIRLATQIGSRLTGVLYILDEPSIGLHQRDNDRLINTLQSMRDIGNTLIVVEHDEDTMMAADYLIDIGPGAGEHGGRIVAAGTPEEVAKNKNSITGDYLSGKKFIPVPAKRRKGNGLELEIVGAKANNLKNVNAKIPLATFSCVTGVSGSGKSSLVNEVLRKALARKLNRNHAKPGEHKEIKGIENLEKIINIDQSPIGRTPRSNPATYTGAFDDIRDLFASTNEAKVRGYKKGRFSFNVKGGRCEACKGDGIIKIEMHFLPDVYVPCEVCHGKRYNGETLDIRYKGKNIAEVLEMTVEEGLEYFTNQPRIARKLQTIVDVGLGYIRLGQPATTLSGGEAQRVKLASELHKRSNGKSFYILDEPTTGLHADDIGRLLKVLQRLVEENGDTVLVIEHNLDVIKQADYLIDLGPEGGDGGGQIIATGTPEKIARSKKSYTGKYLKPILERDKERTEERIATAKKK</sequence>
<feature type="chain" id="PRO_0000093060" description="UvrABC system protein A">
    <location>
        <begin position="1"/>
        <end position="956"/>
    </location>
</feature>
<feature type="domain" description="ABC transporter 1" evidence="1">
    <location>
        <begin position="309"/>
        <end position="587"/>
    </location>
</feature>
<feature type="domain" description="ABC transporter 2" evidence="1">
    <location>
        <begin position="607"/>
        <end position="936"/>
    </location>
</feature>
<feature type="zinc finger region" description="C4-type" evidence="1">
    <location>
        <begin position="252"/>
        <end position="279"/>
    </location>
</feature>
<feature type="zinc finger region" description="C4-type" evidence="1">
    <location>
        <begin position="738"/>
        <end position="764"/>
    </location>
</feature>
<feature type="binding site" evidence="1">
    <location>
        <begin position="33"/>
        <end position="40"/>
    </location>
    <ligand>
        <name>ATP</name>
        <dbReference type="ChEBI" id="CHEBI:30616"/>
    </ligand>
</feature>
<feature type="binding site" evidence="1">
    <location>
        <begin position="639"/>
        <end position="646"/>
    </location>
    <ligand>
        <name>ATP</name>
        <dbReference type="ChEBI" id="CHEBI:30616"/>
    </ligand>
</feature>
<evidence type="ECO:0000255" key="1">
    <source>
        <dbReference type="HAMAP-Rule" id="MF_00205"/>
    </source>
</evidence>
<organism>
    <name type="scientific">Listeria innocua serovar 6a (strain ATCC BAA-680 / CLIP 11262)</name>
    <dbReference type="NCBI Taxonomy" id="272626"/>
    <lineage>
        <taxon>Bacteria</taxon>
        <taxon>Bacillati</taxon>
        <taxon>Bacillota</taxon>
        <taxon>Bacilli</taxon>
        <taxon>Bacillales</taxon>
        <taxon>Listeriaceae</taxon>
        <taxon>Listeria</taxon>
    </lineage>
</organism>
<dbReference type="EMBL" id="AL596173">
    <property type="protein sequence ID" value="CAC97858.1"/>
    <property type="molecule type" value="Genomic_DNA"/>
</dbReference>
<dbReference type="PIR" id="AB1761">
    <property type="entry name" value="AB1761"/>
</dbReference>
<dbReference type="RefSeq" id="WP_010991309.1">
    <property type="nucleotide sequence ID" value="NC_003212.1"/>
</dbReference>
<dbReference type="SMR" id="Q928A5"/>
<dbReference type="STRING" id="272626.gene:17567012"/>
<dbReference type="GeneID" id="93235895"/>
<dbReference type="KEGG" id="lin:uvrA"/>
<dbReference type="eggNOG" id="COG0178">
    <property type="taxonomic scope" value="Bacteria"/>
</dbReference>
<dbReference type="HOGENOM" id="CLU_001370_0_2_9"/>
<dbReference type="OrthoDB" id="9809851at2"/>
<dbReference type="Proteomes" id="UP000002513">
    <property type="component" value="Chromosome"/>
</dbReference>
<dbReference type="GO" id="GO:0005737">
    <property type="term" value="C:cytoplasm"/>
    <property type="evidence" value="ECO:0007669"/>
    <property type="project" value="UniProtKB-SubCell"/>
</dbReference>
<dbReference type="GO" id="GO:0009380">
    <property type="term" value="C:excinuclease repair complex"/>
    <property type="evidence" value="ECO:0007669"/>
    <property type="project" value="InterPro"/>
</dbReference>
<dbReference type="GO" id="GO:0005524">
    <property type="term" value="F:ATP binding"/>
    <property type="evidence" value="ECO:0007669"/>
    <property type="project" value="UniProtKB-UniRule"/>
</dbReference>
<dbReference type="GO" id="GO:0016887">
    <property type="term" value="F:ATP hydrolysis activity"/>
    <property type="evidence" value="ECO:0007669"/>
    <property type="project" value="InterPro"/>
</dbReference>
<dbReference type="GO" id="GO:0003677">
    <property type="term" value="F:DNA binding"/>
    <property type="evidence" value="ECO:0007669"/>
    <property type="project" value="UniProtKB-UniRule"/>
</dbReference>
<dbReference type="GO" id="GO:0009381">
    <property type="term" value="F:excinuclease ABC activity"/>
    <property type="evidence" value="ECO:0007669"/>
    <property type="project" value="UniProtKB-UniRule"/>
</dbReference>
<dbReference type="GO" id="GO:0008270">
    <property type="term" value="F:zinc ion binding"/>
    <property type="evidence" value="ECO:0007669"/>
    <property type="project" value="UniProtKB-UniRule"/>
</dbReference>
<dbReference type="GO" id="GO:0006289">
    <property type="term" value="P:nucleotide-excision repair"/>
    <property type="evidence" value="ECO:0007669"/>
    <property type="project" value="UniProtKB-UniRule"/>
</dbReference>
<dbReference type="GO" id="GO:0009432">
    <property type="term" value="P:SOS response"/>
    <property type="evidence" value="ECO:0007669"/>
    <property type="project" value="UniProtKB-UniRule"/>
</dbReference>
<dbReference type="CDD" id="cd03270">
    <property type="entry name" value="ABC_UvrA_I"/>
    <property type="match status" value="1"/>
</dbReference>
<dbReference type="CDD" id="cd03271">
    <property type="entry name" value="ABC_UvrA_II"/>
    <property type="match status" value="1"/>
</dbReference>
<dbReference type="FunFam" id="1.20.1580.10:FF:000002">
    <property type="entry name" value="UvrABC system protein A"/>
    <property type="match status" value="1"/>
</dbReference>
<dbReference type="FunFam" id="3.40.50.300:FF:000028">
    <property type="entry name" value="UvrABC system protein A"/>
    <property type="match status" value="1"/>
</dbReference>
<dbReference type="Gene3D" id="1.10.8.280">
    <property type="entry name" value="ABC transporter ATPase domain-like"/>
    <property type="match status" value="1"/>
</dbReference>
<dbReference type="Gene3D" id="1.20.1580.10">
    <property type="entry name" value="ABC transporter ATPase like domain"/>
    <property type="match status" value="2"/>
</dbReference>
<dbReference type="Gene3D" id="3.30.1490.20">
    <property type="entry name" value="ATP-grasp fold, A domain"/>
    <property type="match status" value="1"/>
</dbReference>
<dbReference type="Gene3D" id="3.40.50.300">
    <property type="entry name" value="P-loop containing nucleotide triphosphate hydrolases"/>
    <property type="match status" value="2"/>
</dbReference>
<dbReference type="HAMAP" id="MF_00205">
    <property type="entry name" value="UvrA"/>
    <property type="match status" value="1"/>
</dbReference>
<dbReference type="InterPro" id="IPR003439">
    <property type="entry name" value="ABC_transporter-like_ATP-bd"/>
</dbReference>
<dbReference type="InterPro" id="IPR017871">
    <property type="entry name" value="ABC_transporter-like_CS"/>
</dbReference>
<dbReference type="InterPro" id="IPR013815">
    <property type="entry name" value="ATP_grasp_subdomain_1"/>
</dbReference>
<dbReference type="InterPro" id="IPR027417">
    <property type="entry name" value="P-loop_NTPase"/>
</dbReference>
<dbReference type="InterPro" id="IPR004602">
    <property type="entry name" value="UvrA"/>
</dbReference>
<dbReference type="InterPro" id="IPR041552">
    <property type="entry name" value="UvrA_DNA-bd"/>
</dbReference>
<dbReference type="InterPro" id="IPR041102">
    <property type="entry name" value="UvrA_inter"/>
</dbReference>
<dbReference type="NCBIfam" id="NF001503">
    <property type="entry name" value="PRK00349.1"/>
    <property type="match status" value="1"/>
</dbReference>
<dbReference type="NCBIfam" id="TIGR00630">
    <property type="entry name" value="uvra"/>
    <property type="match status" value="1"/>
</dbReference>
<dbReference type="PANTHER" id="PTHR43152">
    <property type="entry name" value="UVRABC SYSTEM PROTEIN A"/>
    <property type="match status" value="1"/>
</dbReference>
<dbReference type="PANTHER" id="PTHR43152:SF3">
    <property type="entry name" value="UVRABC SYSTEM PROTEIN A"/>
    <property type="match status" value="1"/>
</dbReference>
<dbReference type="Pfam" id="PF17755">
    <property type="entry name" value="UvrA_DNA-bind"/>
    <property type="match status" value="1"/>
</dbReference>
<dbReference type="Pfam" id="PF17760">
    <property type="entry name" value="UvrA_inter"/>
    <property type="match status" value="1"/>
</dbReference>
<dbReference type="SUPFAM" id="SSF52540">
    <property type="entry name" value="P-loop containing nucleoside triphosphate hydrolases"/>
    <property type="match status" value="2"/>
</dbReference>
<dbReference type="PROSITE" id="PS00211">
    <property type="entry name" value="ABC_TRANSPORTER_1"/>
    <property type="match status" value="2"/>
</dbReference>
<dbReference type="PROSITE" id="PS50893">
    <property type="entry name" value="ABC_TRANSPORTER_2"/>
    <property type="match status" value="1"/>
</dbReference>
<protein>
    <recommendedName>
        <fullName evidence="1">UvrABC system protein A</fullName>
        <shortName evidence="1">UvrA protein</shortName>
    </recommendedName>
    <alternativeName>
        <fullName evidence="1">Excinuclease ABC subunit A</fullName>
    </alternativeName>
</protein>
<reference key="1">
    <citation type="journal article" date="2001" name="Science">
        <title>Comparative genomics of Listeria species.</title>
        <authorList>
            <person name="Glaser P."/>
            <person name="Frangeul L."/>
            <person name="Buchrieser C."/>
            <person name="Rusniok C."/>
            <person name="Amend A."/>
            <person name="Baquero F."/>
            <person name="Berche P."/>
            <person name="Bloecker H."/>
            <person name="Brandt P."/>
            <person name="Chakraborty T."/>
            <person name="Charbit A."/>
            <person name="Chetouani F."/>
            <person name="Couve E."/>
            <person name="de Daruvar A."/>
            <person name="Dehoux P."/>
            <person name="Domann E."/>
            <person name="Dominguez-Bernal G."/>
            <person name="Duchaud E."/>
            <person name="Durant L."/>
            <person name="Dussurget O."/>
            <person name="Entian K.-D."/>
            <person name="Fsihi H."/>
            <person name="Garcia-del Portillo F."/>
            <person name="Garrido P."/>
            <person name="Gautier L."/>
            <person name="Goebel W."/>
            <person name="Gomez-Lopez N."/>
            <person name="Hain T."/>
            <person name="Hauf J."/>
            <person name="Jackson D."/>
            <person name="Jones L.-M."/>
            <person name="Kaerst U."/>
            <person name="Kreft J."/>
            <person name="Kuhn M."/>
            <person name="Kunst F."/>
            <person name="Kurapkat G."/>
            <person name="Madueno E."/>
            <person name="Maitournam A."/>
            <person name="Mata Vicente J."/>
            <person name="Ng E."/>
            <person name="Nedjari H."/>
            <person name="Nordsiek G."/>
            <person name="Novella S."/>
            <person name="de Pablos B."/>
            <person name="Perez-Diaz J.-C."/>
            <person name="Purcell R."/>
            <person name="Remmel B."/>
            <person name="Rose M."/>
            <person name="Schlueter T."/>
            <person name="Simoes N."/>
            <person name="Tierrez A."/>
            <person name="Vazquez-Boland J.-A."/>
            <person name="Voss H."/>
            <person name="Wehland J."/>
            <person name="Cossart P."/>
        </authorList>
    </citation>
    <scope>NUCLEOTIDE SEQUENCE [LARGE SCALE GENOMIC DNA]</scope>
    <source>
        <strain>ATCC BAA-680 / CLIP 11262</strain>
    </source>
</reference>
<keyword id="KW-0067">ATP-binding</keyword>
<keyword id="KW-0963">Cytoplasm</keyword>
<keyword id="KW-0227">DNA damage</keyword>
<keyword id="KW-0228">DNA excision</keyword>
<keyword id="KW-0234">DNA repair</keyword>
<keyword id="KW-0238">DNA-binding</keyword>
<keyword id="KW-0267">Excision nuclease</keyword>
<keyword id="KW-0479">Metal-binding</keyword>
<keyword id="KW-0547">Nucleotide-binding</keyword>
<keyword id="KW-0677">Repeat</keyword>
<keyword id="KW-0742">SOS response</keyword>
<keyword id="KW-0862">Zinc</keyword>
<keyword id="KW-0863">Zinc-finger</keyword>
<proteinExistence type="inferred from homology"/>
<gene>
    <name evidence="1" type="primary">uvrA</name>
    <name type="ordered locus">lin2631</name>
</gene>